<gene>
    <name evidence="16" type="primary">wrm-1</name>
    <name evidence="16" type="ORF">B0336.1</name>
</gene>
<protein>
    <recommendedName>
        <fullName>Armadillo repeat-containing protein wrm-1</fullName>
    </recommendedName>
    <alternativeName>
        <fullName>Worm armadillo protein 1</fullName>
    </alternativeName>
</protein>
<sequence>MDVDCAETFSQPCTPLNFNPMTPSTSRVSTPVRPSSTMSARQYSGSPFKAQPQNMEPSNSRVQELREAAVGKRSYTNAWMQGTYAPPQMAGQQQRFSRPPSVIGSTMSHMTNMSEMTAYSYGGLSMLSVNTEMGEFNNFVNQAPYQRALTRVSQVSENQDPTNRQYPMTAPEIIENLESTELINQAAAIRALEPIVKAGGMLQTWGPKGAEPIIRALFQVLIPRPVENENVIRKAFEILHHSILLSNKEIRRIDRMFFRLNAALMDPNGPPVFNVPKPYSIYEIVMTRAIQLDTKFESSAMVLLVHLCCKPHFMKIFFGEDETQQSPAHRRLHKIVIEFAIGNLRRPETKSKNKGLCVSIIKNLSNKNATIKDMSERLGVVSLFHQIMQNEVIHEDLLWSTMQALTVFCGDVKNGTHFVQMGGAQVLCGLLSHGSTRLLHELLKCLRRVSDLPAIQEQDMKESIHCIVQLIGCSDVTIVELATGTLRNIGLHNKMNKAFMVQDGVTSHAIAVLRTSEQFTYQPHANIDLYRKQILSIYENCLSVLNNVTSMAPQDIKESAVSACRMISENADSAYVLLHYFNVGNRKCRKLAVTVMKRVIETVPAFADPFVDLLGTTNEPLPILLLQRAFQSLDEWRKTSVEMMNCDGRSAEQRRELDDRRKDHEDIVKRSVGLLTNLCSQANPRFFHSLKLVLTNGTLNPFQWLTHEMSDGILQEWLAFILSICSRDESLQTFMMYRFLEQAKMTEAFFAELKARRQNSNIQTMLSKIIDLGRHQQRIVSQQHQQHQMQHHRQLM</sequence>
<keyword id="KW-0010">Activator</keyword>
<keyword id="KW-0963">Cytoplasm</keyword>
<keyword id="KW-0217">Developmental protein</keyword>
<keyword id="KW-0539">Nucleus</keyword>
<keyword id="KW-1185">Reference proteome</keyword>
<keyword id="KW-0804">Transcription</keyword>
<keyword id="KW-0805">Transcription regulation</keyword>
<keyword id="KW-0879">Wnt signaling pathway</keyword>
<accession>Q10953</accession>
<accession>O16145</accession>
<dbReference type="EMBL" id="AF013951">
    <property type="protein sequence ID" value="AAC47748.1"/>
    <property type="molecule type" value="mRNA"/>
</dbReference>
<dbReference type="EMBL" id="BX284603">
    <property type="protein sequence ID" value="CCD61515.1"/>
    <property type="molecule type" value="Genomic_DNA"/>
</dbReference>
<dbReference type="PIR" id="T03746">
    <property type="entry name" value="T03746"/>
</dbReference>
<dbReference type="RefSeq" id="NP_498236.1">
    <property type="nucleotide sequence ID" value="NM_065835.9"/>
</dbReference>
<dbReference type="SMR" id="Q10953"/>
<dbReference type="BioGRID" id="41028">
    <property type="interactions" value="23"/>
</dbReference>
<dbReference type="ComplexPortal" id="CPX-1130">
    <property type="entry name" value="Beta-catenin-lit-1 complex"/>
</dbReference>
<dbReference type="FunCoup" id="Q10953">
    <property type="interactions" value="383"/>
</dbReference>
<dbReference type="IntAct" id="Q10953">
    <property type="interactions" value="22"/>
</dbReference>
<dbReference type="MINT" id="Q10953"/>
<dbReference type="STRING" id="6239.B0336.1a.1"/>
<dbReference type="PaxDb" id="6239-B0336.1"/>
<dbReference type="PeptideAtlas" id="Q10953"/>
<dbReference type="EnsemblMetazoa" id="B0336.1a.1">
    <property type="protein sequence ID" value="B0336.1a.1"/>
    <property type="gene ID" value="WBGene00006943"/>
</dbReference>
<dbReference type="GeneID" id="175802"/>
<dbReference type="KEGG" id="cel:CELE_B0336.1"/>
<dbReference type="UCSC" id="B0336.1">
    <property type="organism name" value="c. elegans"/>
</dbReference>
<dbReference type="AGR" id="WB:WBGene00006943"/>
<dbReference type="CTD" id="175802"/>
<dbReference type="WormBase" id="B0336.1a">
    <property type="protein sequence ID" value="CE26743"/>
    <property type="gene ID" value="WBGene00006943"/>
    <property type="gene designation" value="wrm-1"/>
</dbReference>
<dbReference type="eggNOG" id="ENOG502T285">
    <property type="taxonomic scope" value="Eukaryota"/>
</dbReference>
<dbReference type="HOGENOM" id="CLU_352050_0_0_1"/>
<dbReference type="InParanoid" id="Q10953"/>
<dbReference type="OMA" id="QQILVHI"/>
<dbReference type="OrthoDB" id="5808707at2759"/>
<dbReference type="Reactome" id="R-CEL-5218920">
    <property type="pathway name" value="VEGFR2 mediated vascular permeability"/>
</dbReference>
<dbReference type="Reactome" id="R-CEL-6798695">
    <property type="pathway name" value="Neutrophil degranulation"/>
</dbReference>
<dbReference type="Reactome" id="R-CEL-6809371">
    <property type="pathway name" value="Formation of the cornified envelope"/>
</dbReference>
<dbReference type="Reactome" id="R-CEL-8980692">
    <property type="pathway name" value="RHOA GTPase cycle"/>
</dbReference>
<dbReference type="Reactome" id="R-CEL-9013026">
    <property type="pathway name" value="RHOB GTPase cycle"/>
</dbReference>
<dbReference type="Reactome" id="R-CEL-9013406">
    <property type="pathway name" value="RHOQ GTPase cycle"/>
</dbReference>
<dbReference type="Reactome" id="R-CEL-9013407">
    <property type="pathway name" value="RHOH GTPase cycle"/>
</dbReference>
<dbReference type="SignaLink" id="Q10953"/>
<dbReference type="PRO" id="PR:Q10953"/>
<dbReference type="Proteomes" id="UP000001940">
    <property type="component" value="Chromosome III"/>
</dbReference>
<dbReference type="Bgee" id="WBGene00006943">
    <property type="expression patterns" value="Expressed in pharyngeal muscle cell (C elegans) and 4 other cell types or tissues"/>
</dbReference>
<dbReference type="ExpressionAtlas" id="Q10953">
    <property type="expression patterns" value="baseline and differential"/>
</dbReference>
<dbReference type="GO" id="GO:0005912">
    <property type="term" value="C:adherens junction"/>
    <property type="evidence" value="ECO:0000318"/>
    <property type="project" value="GO_Central"/>
</dbReference>
<dbReference type="GO" id="GO:0016342">
    <property type="term" value="C:catenin complex"/>
    <property type="evidence" value="ECO:0000318"/>
    <property type="project" value="GO_Central"/>
</dbReference>
<dbReference type="GO" id="GO:0005938">
    <property type="term" value="C:cell cortex"/>
    <property type="evidence" value="ECO:0000314"/>
    <property type="project" value="WormBase"/>
</dbReference>
<dbReference type="GO" id="GO:0005737">
    <property type="term" value="C:cytoplasm"/>
    <property type="evidence" value="ECO:0000314"/>
    <property type="project" value="UniProtKB"/>
</dbReference>
<dbReference type="GO" id="GO:0005634">
    <property type="term" value="C:nucleus"/>
    <property type="evidence" value="ECO:0000314"/>
    <property type="project" value="UniProtKB"/>
</dbReference>
<dbReference type="GO" id="GO:1902554">
    <property type="term" value="C:serine/threonine protein kinase complex"/>
    <property type="evidence" value="ECO:0000314"/>
    <property type="project" value="WormBase"/>
</dbReference>
<dbReference type="GO" id="GO:0045294">
    <property type="term" value="F:alpha-catenin binding"/>
    <property type="evidence" value="ECO:0000318"/>
    <property type="project" value="GO_Central"/>
</dbReference>
<dbReference type="GO" id="GO:0045296">
    <property type="term" value="F:cadherin binding"/>
    <property type="evidence" value="ECO:0000318"/>
    <property type="project" value="GO_Central"/>
</dbReference>
<dbReference type="GO" id="GO:0140297">
    <property type="term" value="F:DNA-binding transcription factor binding"/>
    <property type="evidence" value="ECO:0000353"/>
    <property type="project" value="WormBase"/>
</dbReference>
<dbReference type="GO" id="GO:0016922">
    <property type="term" value="F:nuclear receptor binding"/>
    <property type="evidence" value="ECO:0000353"/>
    <property type="project" value="UniProtKB"/>
</dbReference>
<dbReference type="GO" id="GO:0019901">
    <property type="term" value="F:protein kinase binding"/>
    <property type="evidence" value="ECO:0000353"/>
    <property type="project" value="UniProtKB"/>
</dbReference>
<dbReference type="GO" id="GO:0019903">
    <property type="term" value="F:protein phosphatase binding"/>
    <property type="evidence" value="ECO:0000318"/>
    <property type="project" value="GO_Central"/>
</dbReference>
<dbReference type="GO" id="GO:0043539">
    <property type="term" value="F:protein serine/threonine kinase activator activity"/>
    <property type="evidence" value="ECO:0000314"/>
    <property type="project" value="WormBase"/>
</dbReference>
<dbReference type="GO" id="GO:0003713">
    <property type="term" value="F:transcription coactivator activity"/>
    <property type="evidence" value="ECO:0000314"/>
    <property type="project" value="WormBase"/>
</dbReference>
<dbReference type="GO" id="GO:0045167">
    <property type="term" value="P:asymmetric protein localization involved in cell fate determination"/>
    <property type="evidence" value="ECO:0000315"/>
    <property type="project" value="WormBase"/>
</dbReference>
<dbReference type="GO" id="GO:0060070">
    <property type="term" value="P:canonical Wnt signaling pathway"/>
    <property type="evidence" value="ECO:0000315"/>
    <property type="project" value="UniProtKB"/>
</dbReference>
<dbReference type="GO" id="GO:0060795">
    <property type="term" value="P:cell fate commitment involved in formation of primary germ layer"/>
    <property type="evidence" value="ECO:0000315"/>
    <property type="project" value="UniProtKB"/>
</dbReference>
<dbReference type="GO" id="GO:0098609">
    <property type="term" value="P:cell-cell adhesion"/>
    <property type="evidence" value="ECO:0000318"/>
    <property type="project" value="GO_Central"/>
</dbReference>
<dbReference type="GO" id="GO:0009792">
    <property type="term" value="P:embryo development ending in birth or egg hatching"/>
    <property type="evidence" value="ECO:0000315"/>
    <property type="project" value="WormBase"/>
</dbReference>
<dbReference type="GO" id="GO:0010172">
    <property type="term" value="P:embryonic body morphogenesis"/>
    <property type="evidence" value="ECO:0000315"/>
    <property type="project" value="WormBase"/>
</dbReference>
<dbReference type="GO" id="GO:0007492">
    <property type="term" value="P:endoderm development"/>
    <property type="evidence" value="ECO:0000315"/>
    <property type="project" value="UniProtKB"/>
</dbReference>
<dbReference type="GO" id="GO:0001714">
    <property type="term" value="P:endodermal cell fate specification"/>
    <property type="evidence" value="ECO:0000315"/>
    <property type="project" value="WormBase"/>
</dbReference>
<dbReference type="GO" id="GO:0000132">
    <property type="term" value="P:establishment of mitotic spindle orientation"/>
    <property type="evidence" value="ECO:0000315"/>
    <property type="project" value="UniProtKB"/>
</dbReference>
<dbReference type="GO" id="GO:0070986">
    <property type="term" value="P:left/right axis specification"/>
    <property type="evidence" value="ECO:0000315"/>
    <property type="project" value="UniProtKB"/>
</dbReference>
<dbReference type="GO" id="GO:0051782">
    <property type="term" value="P:negative regulation of cell division"/>
    <property type="evidence" value="ECO:0000316"/>
    <property type="project" value="UniProtKB"/>
</dbReference>
<dbReference type="GO" id="GO:0043433">
    <property type="term" value="P:negative regulation of DNA-binding transcription factor activity"/>
    <property type="evidence" value="ECO:0000314"/>
    <property type="project" value="UniProtKB"/>
</dbReference>
<dbReference type="GO" id="GO:0009949">
    <property type="term" value="P:polarity specification of anterior/posterior axis"/>
    <property type="evidence" value="ECO:0000315"/>
    <property type="project" value="ComplexPortal"/>
</dbReference>
<dbReference type="GO" id="GO:0010085">
    <property type="term" value="P:polarity specification of proximal/distal axis"/>
    <property type="evidence" value="ECO:0000315"/>
    <property type="project" value="WormBase"/>
</dbReference>
<dbReference type="GO" id="GO:1904787">
    <property type="term" value="P:positive regulation of asymmetric protein localization involved in cell fate determination"/>
    <property type="evidence" value="ECO:0000315"/>
    <property type="project" value="UniProtKB"/>
</dbReference>
<dbReference type="GO" id="GO:0051781">
    <property type="term" value="P:positive regulation of cell division"/>
    <property type="evidence" value="ECO:0000315"/>
    <property type="project" value="UniProtKB"/>
</dbReference>
<dbReference type="GO" id="GO:1900182">
    <property type="term" value="P:positive regulation of protein localization to nucleus"/>
    <property type="evidence" value="ECO:0000315"/>
    <property type="project" value="WormBase"/>
</dbReference>
<dbReference type="GO" id="GO:0001934">
    <property type="term" value="P:positive regulation of protein phosphorylation"/>
    <property type="evidence" value="ECO:0000314"/>
    <property type="project" value="WormBase"/>
</dbReference>
<dbReference type="GO" id="GO:0031334">
    <property type="term" value="P:positive regulation of protein-containing complex assembly"/>
    <property type="evidence" value="ECO:0000314"/>
    <property type="project" value="WormBase"/>
</dbReference>
<dbReference type="GO" id="GO:0045944">
    <property type="term" value="P:positive regulation of transcription by RNA polymerase II"/>
    <property type="evidence" value="ECO:0000314"/>
    <property type="project" value="WormBase"/>
</dbReference>
<dbReference type="GO" id="GO:0045995">
    <property type="term" value="P:regulation of embryonic development"/>
    <property type="evidence" value="ECO:0000315"/>
    <property type="project" value="UniProtKB"/>
</dbReference>
<dbReference type="GO" id="GO:0032880">
    <property type="term" value="P:regulation of protein localization"/>
    <property type="evidence" value="ECO:0000314"/>
    <property type="project" value="WormBase"/>
</dbReference>
<dbReference type="GO" id="GO:0016055">
    <property type="term" value="P:Wnt signaling pathway"/>
    <property type="evidence" value="ECO:0000315"/>
    <property type="project" value="WormBase"/>
</dbReference>
<dbReference type="FunFam" id="1.25.10.10:FF:001287">
    <property type="entry name" value="Armadillo repeat-containing protein wrm-1"/>
    <property type="match status" value="1"/>
</dbReference>
<dbReference type="Gene3D" id="1.25.10.10">
    <property type="entry name" value="Leucine-rich Repeat Variant"/>
    <property type="match status" value="1"/>
</dbReference>
<dbReference type="InterPro" id="IPR011989">
    <property type="entry name" value="ARM-like"/>
</dbReference>
<dbReference type="InterPro" id="IPR016024">
    <property type="entry name" value="ARM-type_fold"/>
</dbReference>
<dbReference type="InterPro" id="IPR000225">
    <property type="entry name" value="Armadillo"/>
</dbReference>
<dbReference type="InterPro" id="IPR013284">
    <property type="entry name" value="Beta-catenin"/>
</dbReference>
<dbReference type="PANTHER" id="PTHR45976">
    <property type="entry name" value="ARMADILLO SEGMENT POLARITY PROTEIN"/>
    <property type="match status" value="1"/>
</dbReference>
<dbReference type="SMART" id="SM00185">
    <property type="entry name" value="ARM"/>
    <property type="match status" value="3"/>
</dbReference>
<dbReference type="SUPFAM" id="SSF48371">
    <property type="entry name" value="ARM repeat"/>
    <property type="match status" value="1"/>
</dbReference>
<reference evidence="14 15" key="1">
    <citation type="journal article" date="1997" name="Cell">
        <title>Wnt signaling and an APC-related gene specify endoderm in early C. elegans embryos.</title>
        <authorList>
            <person name="Rocheleau C.E."/>
            <person name="Downs W.D."/>
            <person name="Lin R."/>
            <person name="Wittmann C."/>
            <person name="Bei Y."/>
            <person name="Cha Y.-H."/>
            <person name="Ali M."/>
            <person name="Priess J.R."/>
            <person name="Mello C.C."/>
        </authorList>
    </citation>
    <scope>NUCLEOTIDE SEQUENCE [MRNA]</scope>
    <scope>FUNCTION</scope>
    <scope>DISRUPTION PHENOTYPE</scope>
    <source>
        <strain evidence="15">Bristol N2</strain>
    </source>
</reference>
<reference key="2">
    <citation type="journal article" date="1998" name="Science">
        <title>Genome sequence of the nematode C. elegans: a platform for investigating biology.</title>
        <authorList>
            <consortium name="The C. elegans sequencing consortium"/>
        </authorList>
    </citation>
    <scope>NUCLEOTIDE SEQUENCE [LARGE SCALE GENOMIC DNA]</scope>
    <source>
        <strain>Bristol N2</strain>
    </source>
</reference>
<reference evidence="14" key="3">
    <citation type="journal article" date="1999" name="Cell">
        <title>WRM-1 activates the LIT-1 protein kinase to transduce anterior/posterior polarity signals in C. elegans.</title>
        <authorList>
            <person name="Rocheleau C.E."/>
            <person name="Yasuda J."/>
            <person name="Shin T.H."/>
            <person name="Lin R."/>
            <person name="Sawa H."/>
            <person name="Okano H."/>
            <person name="Priess J.R."/>
            <person name="Davis R.J."/>
            <person name="Mello C.C."/>
        </authorList>
    </citation>
    <scope>FUNCTION</scope>
    <scope>IDENTIFICATION IN THE BETA-CATENIN-LIT-1 COMPLEX</scope>
    <scope>INTERACTION WITH LIT-1 AND POP-1</scope>
</reference>
<reference evidence="14" key="4">
    <citation type="journal article" date="2001" name="Genetics">
        <title>The divergent Caenorhabditis elegans beta-catenin proteins BAR-1, WRM-1 and HMP-2 make distinct protein interactions but retain functional redundancy in vivo.</title>
        <authorList>
            <person name="Natarajan L."/>
            <person name="Witwer N.E."/>
            <person name="Eisenmann D.M."/>
        </authorList>
    </citation>
    <scope>FUNCTION</scope>
    <scope>INTERACTION WITH LIT-1</scope>
</reference>
<reference evidence="14" key="5">
    <citation type="journal article" date="2002" name="Development">
        <title>POP-1 controls axis formation during early gonadogenesis in C. elegans.</title>
        <authorList>
            <person name="Siegfried K.R."/>
            <person name="Kimble J."/>
        </authorList>
    </citation>
    <scope>FUNCTION</scope>
</reference>
<reference evidence="14" key="6">
    <citation type="journal article" date="2004" name="Cell">
        <title>Phosphorylation by the beta-catenin/MAPK complex promotes 14-3-3-mediated nuclear export of TCF/POP-1 in signal-responsive cells in C. elegans.</title>
        <authorList>
            <person name="Lo M.-C."/>
            <person name="Gay F."/>
            <person name="Odom R."/>
            <person name="Shi Y."/>
            <person name="Lin R."/>
        </authorList>
    </citation>
    <scope>FUNCTION</scope>
    <scope>IDENTIFICATION IN THE BETA-CATENIN-LIT-1 COMPLEX</scope>
    <scope>INTERACTION WITH LIT-1</scope>
</reference>
<reference evidence="14" key="7">
    <citation type="journal article" date="2004" name="Dev. Cell">
        <title>Multiple Wnt signaling pathways converge to orient the mitotic spindle in early C. elegans embryos.</title>
        <authorList>
            <person name="Walston T."/>
            <person name="Tuskey C."/>
            <person name="Edgar L."/>
            <person name="Hawkins N."/>
            <person name="Ellis G."/>
            <person name="Bowerman B."/>
            <person name="Wood W."/>
            <person name="Hardin J."/>
        </authorList>
    </citation>
    <scope>FUNCTION</scope>
    <scope>DEVELOPMENTAL STAGE</scope>
</reference>
<reference evidence="14" key="8">
    <citation type="journal article" date="2005" name="Genes Dev.">
        <title>Asymmetric cortical and nuclear localizations of WRM-1/beta-catenin during asymmetric cell division in C. elegans.</title>
        <authorList>
            <person name="Takeshita H."/>
            <person name="Sawa H."/>
        </authorList>
    </citation>
    <scope>FUNCTION</scope>
    <scope>SUBCELLULAR LOCATION</scope>
</reference>
<reference evidence="14" key="9">
    <citation type="journal article" date="2006" name="Dev. Cell">
        <title>Crosstalk between a nuclear receptor and beta-catenin signaling decides cell fates in the C. elegans somatic gonad.</title>
        <authorList>
            <person name="Asahina M."/>
            <person name="Valenta T."/>
            <person name="Silhankova M."/>
            <person name="Korinek V."/>
            <person name="Jindra M."/>
        </authorList>
    </citation>
    <scope>FUNCTION</scope>
    <scope>INTERACTION WITH NHR-25</scope>
</reference>
<reference evidence="14" key="10">
    <citation type="journal article" date="2007" name="Dev. Cell">
        <title>Cortical beta-catenin and APC regulate asymmetric nuclear beta-catenin localization during asymmetric cell division in C. elegans.</title>
        <authorList>
            <person name="Mizumoto K."/>
            <person name="Sawa H."/>
        </authorList>
    </citation>
    <scope>FUNCTION</scope>
    <scope>SUBCELLULAR LOCATION</scope>
</reference>
<reference key="11">
    <citation type="journal article" date="2007" name="PLoS ONE">
        <title>Cyclin E and CDK2 repress the terminal differentiation of quiescent cells after asymmetric division in C. elegans.</title>
        <authorList>
            <person name="Fujita M."/>
            <person name="Takeshita H."/>
            <person name="Sawa H."/>
        </authorList>
    </citation>
    <scope>FUNCTION</scope>
</reference>
<reference key="12">
    <citation type="journal article" date="2015" name="PLoS Genet.">
        <title>The tumor suppressor BCL7B functions in the Wnt signaling pathway.</title>
        <authorList>
            <person name="Uehara T."/>
            <person name="Kage-Nakadai E."/>
            <person name="Yoshina S."/>
            <person name="Imae R."/>
            <person name="Mitani S."/>
        </authorList>
    </citation>
    <scope>SUBCELLULAR LOCATION</scope>
    <scope>DEVELOPMENTAL STAGE</scope>
</reference>
<proteinExistence type="evidence at protein level"/>
<organism>
    <name type="scientific">Caenorhabditis elegans</name>
    <dbReference type="NCBI Taxonomy" id="6239"/>
    <lineage>
        <taxon>Eukaryota</taxon>
        <taxon>Metazoa</taxon>
        <taxon>Ecdysozoa</taxon>
        <taxon>Nematoda</taxon>
        <taxon>Chromadorea</taxon>
        <taxon>Rhabditida</taxon>
        <taxon>Rhabditina</taxon>
        <taxon>Rhabditomorpha</taxon>
        <taxon>Rhabditoidea</taxon>
        <taxon>Rhabditidae</taxon>
        <taxon>Peloderinae</taxon>
        <taxon>Caenorhabditis</taxon>
    </lineage>
</organism>
<feature type="chain" id="PRO_0000342701" description="Armadillo repeat-containing protein wrm-1">
    <location>
        <begin position="1"/>
        <end position="796"/>
    </location>
</feature>
<feature type="repeat" description="ARM" evidence="1">
    <location>
        <begin position="462"/>
        <end position="504"/>
    </location>
</feature>
<feature type="region of interest" description="Disordered" evidence="2">
    <location>
        <begin position="17"/>
        <end position="59"/>
    </location>
</feature>
<name>WRM1_CAEEL</name>
<comment type="function">
    <text evidence="3 4 5 6 7 8 9 10 11 13">Antagonistic role in the Wnt signaling pathway that operates in embryogenesis. When located at the cortex it has been shown to inhibit Wnt signaling during asymmetric cell division but when relocated to the nucleus it shows positive regulation. Has a role in blastomere signaling during endoderm specification. Component of the beta-catenin-lit-1 complex which promotes phosphorylation, down-regulation and subcellular relocation of pop-1 (PubMed:10380924). Within the complex, activates lit-1-dependent kinase activity (PubMed:10380924). Can substitute for bar-1 indicating functional redundancy. Appears to have a role in centrosome positioning and can activation transcription in yeast. Involved in the development of distal tip cells (DTC) by regulating the asymmetric distribution of cye-1 and cki-1 between the daughters of Z1.a and Z4.p cells (PubMed:17476329).</text>
</comment>
<comment type="subunit">
    <text evidence="3 4 6 9">Interacts (independently of ARM repeat) with nhr-25 (PubMed:16890160). Component of the beta-catenin-lit-1 complex (also called the lit-1/wrm-1 complex or the wrm-1/lit-1 kinase complex) at least composed of lit-1 and wrm-1 (PubMed:10380924, PubMed:15066285). Interacts (via N-terminus) with lit-1; the interaction is direct and activates lit-1 kinase activity which leads to the phosphorylation of pop-1 (PubMed:10380924, PubMed:11560894, PubMed:15066285). This promotes pop-1 interaction with par-5 and translocation of pop-1 from the nucleus to the cytoplasm (PubMed:15066285).</text>
</comment>
<comment type="interaction">
    <interactant intactId="EBI-2530558">
        <id>Q10953</id>
    </interactant>
    <interactant intactId="EBI-318513">
        <id>Q9U9Y8</id>
        <label>lit-1</label>
    </interactant>
    <organismsDiffer>false</organismsDiffer>
    <experiments>8</experiments>
</comment>
<comment type="interaction">
    <interactant intactId="EBI-2530558">
        <id>Q10953</id>
    </interactant>
    <interactant intactId="EBI-3871243">
        <id>Q19345</id>
        <label>nhr-25</label>
    </interactant>
    <organismsDiffer>false</organismsDiffer>
    <experiments>3</experiments>
</comment>
<comment type="subcellular location">
    <subcellularLocation>
        <location evidence="8 10 12">Cytoplasm</location>
        <location evidence="8 10 12">Cell cortex</location>
    </subcellularLocation>
    <subcellularLocation>
        <location evidence="8 10">Nucleus</location>
    </subcellularLocation>
    <text evidence="8 10 12">Located in the anterior cell cortex before and during asymmetric cell division. After division, located preferentially in the nucleus of the posterior daughter cell.</text>
</comment>
<comment type="developmental stage">
    <text evidence="12">Expressed in the developing cells of the embryo including hypodermal cells, neuroblasts, and mesodermal cells (PubMed:15572126). Expressed in seam cells in hermaphrodites at the L2 stage of larval development (PubMed:25569233).</text>
</comment>
<comment type="disruption phenotype">
    <text evidence="13">Worms exhibit premature cell cleavage during embryogenesis, symmetrical cell division during gonadogenesis and undifferentiated intestines. Embryos show a defect in centrosome positioning that delays ABar spindle alignment and appear to lack endoderm.</text>
</comment>
<evidence type="ECO:0000255" key="1"/>
<evidence type="ECO:0000256" key="2">
    <source>
        <dbReference type="SAM" id="MobiDB-lite"/>
    </source>
</evidence>
<evidence type="ECO:0000269" key="3">
    <source>
    </source>
</evidence>
<evidence type="ECO:0000269" key="4">
    <source>
    </source>
</evidence>
<evidence type="ECO:0000269" key="5">
    <source>
    </source>
</evidence>
<evidence type="ECO:0000269" key="6">
    <source>
    </source>
</evidence>
<evidence type="ECO:0000269" key="7">
    <source>
    </source>
</evidence>
<evidence type="ECO:0000269" key="8">
    <source>
    </source>
</evidence>
<evidence type="ECO:0000269" key="9">
    <source>
    </source>
</evidence>
<evidence type="ECO:0000269" key="10">
    <source>
    </source>
</evidence>
<evidence type="ECO:0000269" key="11">
    <source>
    </source>
</evidence>
<evidence type="ECO:0000269" key="12">
    <source>
    </source>
</evidence>
<evidence type="ECO:0000269" key="13">
    <source>
    </source>
</evidence>
<evidence type="ECO:0000305" key="14"/>
<evidence type="ECO:0000312" key="15">
    <source>
        <dbReference type="EMBL" id="AAC47748.1"/>
    </source>
</evidence>
<evidence type="ECO:0000312" key="16">
    <source>
        <dbReference type="WormBase" id="B0336.1a"/>
    </source>
</evidence>